<dbReference type="EC" id="7.1.1.-"/>
<dbReference type="EMBL" id="AP009370">
    <property type="protein sequence ID" value="BAF50165.1"/>
    <property type="molecule type" value="Genomic_DNA"/>
</dbReference>
<dbReference type="RefSeq" id="YP_001123340.1">
    <property type="nucleotide sequence ID" value="NC_009269.1"/>
</dbReference>
<dbReference type="SMR" id="A4QKG0"/>
<dbReference type="GeneID" id="4961928"/>
<dbReference type="GO" id="GO:0009535">
    <property type="term" value="C:chloroplast thylakoid membrane"/>
    <property type="evidence" value="ECO:0007669"/>
    <property type="project" value="UniProtKB-SubCell"/>
</dbReference>
<dbReference type="GO" id="GO:0008137">
    <property type="term" value="F:NADH dehydrogenase (ubiquinone) activity"/>
    <property type="evidence" value="ECO:0007669"/>
    <property type="project" value="InterPro"/>
</dbReference>
<dbReference type="GO" id="GO:0048038">
    <property type="term" value="F:quinone binding"/>
    <property type="evidence" value="ECO:0007669"/>
    <property type="project" value="UniProtKB-KW"/>
</dbReference>
<dbReference type="FunFam" id="1.20.120.1200:FF:000002">
    <property type="entry name" value="NAD(P)H-quinone oxidoreductase subunit 6, chloroplastic"/>
    <property type="match status" value="1"/>
</dbReference>
<dbReference type="Gene3D" id="1.20.120.1200">
    <property type="entry name" value="NADH-ubiquinone/plastoquinone oxidoreductase chain 6, subunit NuoJ"/>
    <property type="match status" value="1"/>
</dbReference>
<dbReference type="InterPro" id="IPR050290">
    <property type="entry name" value="NAD(P)H-Q_Oxidoreduct_6"/>
</dbReference>
<dbReference type="InterPro" id="IPR001457">
    <property type="entry name" value="NADH_UbQ/plastoQ_OxRdtase_su6"/>
</dbReference>
<dbReference type="InterPro" id="IPR042106">
    <property type="entry name" value="Nuo/plastoQ_OxRdtase_6_NuoJ"/>
</dbReference>
<dbReference type="PANTHER" id="PTHR48479">
    <property type="entry name" value="NAD(P)H-QUINONE OXIDOREDUCTASE SUBUNIT 6, CHLOROPLASTIC"/>
    <property type="match status" value="1"/>
</dbReference>
<dbReference type="PANTHER" id="PTHR48479:SF1">
    <property type="entry name" value="NAD(P)H-QUINONE OXIDOREDUCTASE SUBUNIT 6, CHLOROPLASTIC"/>
    <property type="match status" value="1"/>
</dbReference>
<dbReference type="Pfam" id="PF00499">
    <property type="entry name" value="Oxidored_q3"/>
    <property type="match status" value="1"/>
</dbReference>
<feature type="chain" id="PRO_0000360230" description="NAD(P)H-quinone oxidoreductase subunit 6, chloroplastic">
    <location>
        <begin position="1"/>
        <end position="176"/>
    </location>
</feature>
<feature type="transmembrane region" description="Helical" evidence="2">
    <location>
        <begin position="10"/>
        <end position="30"/>
    </location>
</feature>
<feature type="transmembrane region" description="Helical" evidence="2">
    <location>
        <begin position="32"/>
        <end position="52"/>
    </location>
</feature>
<feature type="transmembrane region" description="Helical" evidence="2">
    <location>
        <begin position="61"/>
        <end position="81"/>
    </location>
</feature>
<feature type="transmembrane region" description="Helical" evidence="2">
    <location>
        <begin position="92"/>
        <end position="112"/>
    </location>
</feature>
<feature type="transmembrane region" description="Helical" evidence="2">
    <location>
        <begin position="152"/>
        <end position="172"/>
    </location>
</feature>
<geneLocation type="chloroplast"/>
<protein>
    <recommendedName>
        <fullName>NAD(P)H-quinone oxidoreductase subunit 6, chloroplastic</fullName>
        <ecNumber>7.1.1.-</ecNumber>
    </recommendedName>
    <alternativeName>
        <fullName>NAD(P)H dehydrogenase subunit 6</fullName>
    </alternativeName>
    <alternativeName>
        <fullName>NADH-plastoquinone oxidoreductase subunit 6</fullName>
    </alternativeName>
</protein>
<keyword id="KW-0150">Chloroplast</keyword>
<keyword id="KW-0472">Membrane</keyword>
<keyword id="KW-0520">NAD</keyword>
<keyword id="KW-0521">NADP</keyword>
<keyword id="KW-0934">Plastid</keyword>
<keyword id="KW-0618">Plastoquinone</keyword>
<keyword id="KW-0874">Quinone</keyword>
<keyword id="KW-0793">Thylakoid</keyword>
<keyword id="KW-1278">Translocase</keyword>
<keyword id="KW-0812">Transmembrane</keyword>
<keyword id="KW-1133">Transmembrane helix</keyword>
<keyword id="KW-0813">Transport</keyword>
<name>NU6C_BARVE</name>
<comment type="function">
    <text evidence="1">NDH shuttles electrons from NAD(P)H:plastoquinone, via FMN and iron-sulfur (Fe-S) centers, to quinones in the photosynthetic chain and possibly in a chloroplast respiratory chain. The immediate electron acceptor for the enzyme in this species is believed to be plastoquinone. Couples the redox reaction to proton translocation, and thus conserves the redox energy in a proton gradient (By similarity).</text>
</comment>
<comment type="catalytic activity">
    <reaction>
        <text>a plastoquinone + NADH + (n+1) H(+)(in) = a plastoquinol + NAD(+) + n H(+)(out)</text>
        <dbReference type="Rhea" id="RHEA:42608"/>
        <dbReference type="Rhea" id="RHEA-COMP:9561"/>
        <dbReference type="Rhea" id="RHEA-COMP:9562"/>
        <dbReference type="ChEBI" id="CHEBI:15378"/>
        <dbReference type="ChEBI" id="CHEBI:17757"/>
        <dbReference type="ChEBI" id="CHEBI:57540"/>
        <dbReference type="ChEBI" id="CHEBI:57945"/>
        <dbReference type="ChEBI" id="CHEBI:62192"/>
    </reaction>
</comment>
<comment type="catalytic activity">
    <reaction>
        <text>a plastoquinone + NADPH + (n+1) H(+)(in) = a plastoquinol + NADP(+) + n H(+)(out)</text>
        <dbReference type="Rhea" id="RHEA:42612"/>
        <dbReference type="Rhea" id="RHEA-COMP:9561"/>
        <dbReference type="Rhea" id="RHEA-COMP:9562"/>
        <dbReference type="ChEBI" id="CHEBI:15378"/>
        <dbReference type="ChEBI" id="CHEBI:17757"/>
        <dbReference type="ChEBI" id="CHEBI:57783"/>
        <dbReference type="ChEBI" id="CHEBI:58349"/>
        <dbReference type="ChEBI" id="CHEBI:62192"/>
    </reaction>
</comment>
<comment type="subunit">
    <text evidence="1">NDH is composed of at least 16 different subunits, 5 of which are encoded in the nucleus.</text>
</comment>
<comment type="subcellular location">
    <subcellularLocation>
        <location evidence="1">Plastid</location>
        <location evidence="1">Chloroplast thylakoid membrane</location>
        <topology evidence="1">Multi-pass membrane protein</topology>
    </subcellularLocation>
</comment>
<comment type="similarity">
    <text evidence="3">Belongs to the complex I subunit 6 family.</text>
</comment>
<gene>
    <name type="primary">ndhG</name>
</gene>
<evidence type="ECO:0000250" key="1"/>
<evidence type="ECO:0000255" key="2"/>
<evidence type="ECO:0000305" key="3"/>
<sequence>MDLPGPIHDFLLVFLGSGLLVGGLGVVLLPNPIFSAFSLGFVLVCISLLYILSNSHFVAAAQLLIYVGAINVLIIFAVMFMNDSEYSTDLNLWTVGNGITSLVCTTILFSLMSTILDTSWYGVIWTTRLNQILEQDLISNSQQIGIHLSTDFFLPFELISIILLVALIGAISMARQ</sequence>
<accession>A4QKG0</accession>
<proteinExistence type="inferred from homology"/>
<reference key="1">
    <citation type="submission" date="2007-03" db="EMBL/GenBank/DDBJ databases">
        <title>Sequencing analysis of Barbarea verna chloroplast DNA.</title>
        <authorList>
            <person name="Hosouchi T."/>
            <person name="Tsuruoka H."/>
            <person name="Kotani H."/>
        </authorList>
    </citation>
    <scope>NUCLEOTIDE SEQUENCE [LARGE SCALE GENOMIC DNA]</scope>
</reference>
<organism>
    <name type="scientific">Barbarea verna</name>
    <name type="common">Land cress</name>
    <name type="synonym">Erysimum vernum</name>
    <dbReference type="NCBI Taxonomy" id="50458"/>
    <lineage>
        <taxon>Eukaryota</taxon>
        <taxon>Viridiplantae</taxon>
        <taxon>Streptophyta</taxon>
        <taxon>Embryophyta</taxon>
        <taxon>Tracheophyta</taxon>
        <taxon>Spermatophyta</taxon>
        <taxon>Magnoliopsida</taxon>
        <taxon>eudicotyledons</taxon>
        <taxon>Gunneridae</taxon>
        <taxon>Pentapetalae</taxon>
        <taxon>rosids</taxon>
        <taxon>malvids</taxon>
        <taxon>Brassicales</taxon>
        <taxon>Brassicaceae</taxon>
        <taxon>Cardamineae</taxon>
        <taxon>Barbarea</taxon>
    </lineage>
</organism>